<dbReference type="EMBL" id="AF208682">
    <property type="protein sequence ID" value="AAF19204.1"/>
    <property type="status" value="ALT_INIT"/>
    <property type="molecule type" value="Genomic_DNA"/>
</dbReference>
<dbReference type="EMBL" id="CP002000">
    <property type="protein sequence ID" value="ADJ44141.1"/>
    <property type="molecule type" value="Genomic_DNA"/>
</dbReference>
<dbReference type="RefSeq" id="WP_013224218.1">
    <property type="nucleotide sequence ID" value="NC_014318.1"/>
</dbReference>
<dbReference type="RefSeq" id="YP_003764543.1">
    <property type="nucleotide sequence ID" value="NC_014318.1"/>
</dbReference>
<dbReference type="SMR" id="Q9REV5"/>
<dbReference type="GeneID" id="92870125"/>
<dbReference type="KEGG" id="amd:AMED_2344"/>
<dbReference type="PATRIC" id="fig|749927.5.peg.2418"/>
<dbReference type="eggNOG" id="COG2137">
    <property type="taxonomic scope" value="Bacteria"/>
</dbReference>
<dbReference type="HOGENOM" id="CLU_066607_0_2_11"/>
<dbReference type="OrthoDB" id="5244465at2"/>
<dbReference type="Proteomes" id="UP000000328">
    <property type="component" value="Chromosome"/>
</dbReference>
<dbReference type="GO" id="GO:0005737">
    <property type="term" value="C:cytoplasm"/>
    <property type="evidence" value="ECO:0007669"/>
    <property type="project" value="UniProtKB-SubCell"/>
</dbReference>
<dbReference type="GO" id="GO:0006282">
    <property type="term" value="P:regulation of DNA repair"/>
    <property type="evidence" value="ECO:0007669"/>
    <property type="project" value="UniProtKB-UniRule"/>
</dbReference>
<dbReference type="Gene3D" id="1.10.10.10">
    <property type="entry name" value="Winged helix-like DNA-binding domain superfamily/Winged helix DNA-binding domain"/>
    <property type="match status" value="2"/>
</dbReference>
<dbReference type="HAMAP" id="MF_01114">
    <property type="entry name" value="RecX"/>
    <property type="match status" value="1"/>
</dbReference>
<dbReference type="InterPro" id="IPR053926">
    <property type="entry name" value="RecX_HTH_1st"/>
</dbReference>
<dbReference type="InterPro" id="IPR053924">
    <property type="entry name" value="RecX_HTH_2nd"/>
</dbReference>
<dbReference type="InterPro" id="IPR053925">
    <property type="entry name" value="RecX_HTH_3rd"/>
</dbReference>
<dbReference type="InterPro" id="IPR003783">
    <property type="entry name" value="Regulatory_RecX"/>
</dbReference>
<dbReference type="InterPro" id="IPR036388">
    <property type="entry name" value="WH-like_DNA-bd_sf"/>
</dbReference>
<dbReference type="PANTHER" id="PTHR33602">
    <property type="entry name" value="REGULATORY PROTEIN RECX FAMILY PROTEIN"/>
    <property type="match status" value="1"/>
</dbReference>
<dbReference type="PANTHER" id="PTHR33602:SF1">
    <property type="entry name" value="REGULATORY PROTEIN RECX FAMILY PROTEIN"/>
    <property type="match status" value="1"/>
</dbReference>
<dbReference type="Pfam" id="PF21982">
    <property type="entry name" value="RecX_HTH1"/>
    <property type="match status" value="1"/>
</dbReference>
<dbReference type="Pfam" id="PF02631">
    <property type="entry name" value="RecX_HTH2"/>
    <property type="match status" value="1"/>
</dbReference>
<dbReference type="Pfam" id="PF21981">
    <property type="entry name" value="RecX_HTH3"/>
    <property type="match status" value="1"/>
</dbReference>
<feature type="chain" id="PRO_0000162412" description="Regulatory protein RecX">
    <location>
        <begin position="1"/>
        <end position="175"/>
    </location>
</feature>
<feature type="sequence conflict" description="In Ref. 1; AAF19204." evidence="2" ref="1">
    <location>
        <begin position="93"/>
        <end position="127"/>
    </location>
</feature>
<comment type="function">
    <text evidence="1">Modulates RecA activity.</text>
</comment>
<comment type="subcellular location">
    <subcellularLocation>
        <location evidence="2">Cytoplasm</location>
    </subcellularLocation>
</comment>
<comment type="similarity">
    <text evidence="2">Belongs to the RecX family.</text>
</comment>
<comment type="sequence caution" evidence="2">
    <conflict type="erroneous initiation">
        <sequence resource="EMBL-CDS" id="AAF19204"/>
    </conflict>
    <text>Extended N-terminus.</text>
</comment>
<protein>
    <recommendedName>
        <fullName>Regulatory protein RecX</fullName>
    </recommendedName>
</protein>
<organism>
    <name type="scientific">Amycolatopsis mediterranei (strain U-32)</name>
    <dbReference type="NCBI Taxonomy" id="749927"/>
    <lineage>
        <taxon>Bacteria</taxon>
        <taxon>Bacillati</taxon>
        <taxon>Actinomycetota</taxon>
        <taxon>Actinomycetes</taxon>
        <taxon>Pseudonocardiales</taxon>
        <taxon>Pseudonocardiaceae</taxon>
        <taxon>Amycolatopsis</taxon>
    </lineage>
</organism>
<proteinExistence type="inferred from homology"/>
<keyword id="KW-0963">Cytoplasm</keyword>
<keyword id="KW-1185">Reference proteome</keyword>
<gene>
    <name type="primary">recX</name>
    <name type="ordered locus">AMED_2344</name>
</gene>
<evidence type="ECO:0000250" key="1"/>
<evidence type="ECO:0000305" key="2"/>
<name>RECX_AMYMU</name>
<reference key="1">
    <citation type="submission" date="1999-11" db="EMBL/GenBank/DDBJ databases">
        <title>Amycolatopsis mediterranei recA, recX genes.</title>
        <authorList>
            <person name="Gao J."/>
            <person name="Jiang W."/>
            <person name="Zhao G."/>
            <person name="Chiao J."/>
        </authorList>
    </citation>
    <scope>NUCLEOTIDE SEQUENCE [GENOMIC DNA]</scope>
</reference>
<reference key="2">
    <citation type="journal article" date="2010" name="Cell Res.">
        <title>Complete genome sequence of the rifamycin SV-producing Amycolatopsis mediterranei U32 revealed its genetic characteristics in phylogeny and metabolism.</title>
        <authorList>
            <person name="Zhao W."/>
            <person name="Zhong Y."/>
            <person name="Yuan H."/>
            <person name="Wang J."/>
            <person name="Zheng H."/>
            <person name="Wang Y."/>
            <person name="Cen X."/>
            <person name="Xu F."/>
            <person name="Bai J."/>
            <person name="Han X."/>
            <person name="Lu G."/>
            <person name="Zhu Y."/>
            <person name="Shao Z."/>
            <person name="Yan H."/>
            <person name="Li C."/>
            <person name="Peng N."/>
            <person name="Zhang Z."/>
            <person name="Zhang Y."/>
            <person name="Lin W."/>
            <person name="Fan Y."/>
            <person name="Qin Z."/>
            <person name="Hu Y."/>
            <person name="Zhu B."/>
            <person name="Wang S."/>
            <person name="Ding X."/>
            <person name="Zhao G.P."/>
        </authorList>
    </citation>
    <scope>NUCLEOTIDE SEQUENCE [LARGE SCALE GENOMIC DNA]</scope>
    <source>
        <strain>U-32</strain>
    </source>
</reference>
<accession>Q9REV5</accession>
<accession>D8HUU3</accession>
<sequence>MPPAELPPEERYKKAKEICFDLLAVRARTQEELRQALRRKGFDEETSETLLGKLDRAGLVNDAEFAELWVKSRHTTQGLSRTALMAELRRKGVDDEVAAQAAGEVDRESEEQMARELVRKRLGSLGNVDEQTALRRLLGFLARKGYPQGLAYTVIKEELREYGAESTLLDDAVID</sequence>